<protein>
    <recommendedName>
        <fullName evidence="1">Dual-specificity RNA methyltransferase RlmN</fullName>
        <ecNumber evidence="1">2.1.1.192</ecNumber>
    </recommendedName>
    <alternativeName>
        <fullName evidence="1">23S rRNA (adenine(2503)-C(2))-methyltransferase</fullName>
    </alternativeName>
    <alternativeName>
        <fullName evidence="1">23S rRNA m2A2503 methyltransferase</fullName>
    </alternativeName>
    <alternativeName>
        <fullName evidence="1">Ribosomal RNA large subunit methyltransferase N</fullName>
    </alternativeName>
    <alternativeName>
        <fullName evidence="1">tRNA (adenine(37)-C(2))-methyltransferase</fullName>
    </alternativeName>
    <alternativeName>
        <fullName evidence="1">tRNA m2A37 methyltransferase</fullName>
    </alternativeName>
</protein>
<sequence length="384" mass="43086">MSEQLVTPENVTTKDGKINLLDLNRQQMREFFKDLGEKPFRADQVMKWMYHYCCDNFDEMTDINKVLRGKLKEVAEIRAPEVVEEQRSSDGTIKWAIAVGDQRVETVYIPEDDRATLCVSSQVGCALECKFCSTAQQGFNRNLRVSEIIGQVWRAAKIVGAAKVTGQRPITNVVMMGMGEPLLNLNNVVPAMEIMLDDFGFGLSKRRVTLSTSGVVPALDKLGDMIDVALAISLHAPNDEIRDEIVPINKKYNIETFLAAVRRYLEKSNANQGRVTIEYVMLDHVNDGTEHAHQLAELLKDTPCKINLIPWNPFPGAPYGRSSNSRIDRFSKVLMSYGFTTIVRKTRGDDIDAACGQLAGDVIDRTKRTLRKRMQGEAIDIKAV</sequence>
<organism>
    <name type="scientific">Shigella boydii serotype 4 (strain Sb227)</name>
    <dbReference type="NCBI Taxonomy" id="300268"/>
    <lineage>
        <taxon>Bacteria</taxon>
        <taxon>Pseudomonadati</taxon>
        <taxon>Pseudomonadota</taxon>
        <taxon>Gammaproteobacteria</taxon>
        <taxon>Enterobacterales</taxon>
        <taxon>Enterobacteriaceae</taxon>
        <taxon>Shigella</taxon>
    </lineage>
</organism>
<keyword id="KW-0004">4Fe-4S</keyword>
<keyword id="KW-0963">Cytoplasm</keyword>
<keyword id="KW-1015">Disulfide bond</keyword>
<keyword id="KW-0408">Iron</keyword>
<keyword id="KW-0411">Iron-sulfur</keyword>
<keyword id="KW-0479">Metal-binding</keyword>
<keyword id="KW-0489">Methyltransferase</keyword>
<keyword id="KW-0698">rRNA processing</keyword>
<keyword id="KW-0949">S-adenosyl-L-methionine</keyword>
<keyword id="KW-0808">Transferase</keyword>
<keyword id="KW-0819">tRNA processing</keyword>
<accession>Q31XX3</accession>
<comment type="function">
    <text evidence="1">Specifically methylates position 2 of adenine 2503 in 23S rRNA and position 2 of adenine 37 in tRNAs. m2A2503 modification seems to play a crucial role in the proofreading step occurring at the peptidyl transferase center and thus would serve to optimize ribosomal fidelity.</text>
</comment>
<comment type="catalytic activity">
    <reaction evidence="1">
        <text>adenosine(2503) in 23S rRNA + 2 reduced [2Fe-2S]-[ferredoxin] + 2 S-adenosyl-L-methionine = 2-methyladenosine(2503) in 23S rRNA + 5'-deoxyadenosine + L-methionine + 2 oxidized [2Fe-2S]-[ferredoxin] + S-adenosyl-L-homocysteine</text>
        <dbReference type="Rhea" id="RHEA:42916"/>
        <dbReference type="Rhea" id="RHEA-COMP:10000"/>
        <dbReference type="Rhea" id="RHEA-COMP:10001"/>
        <dbReference type="Rhea" id="RHEA-COMP:10152"/>
        <dbReference type="Rhea" id="RHEA-COMP:10282"/>
        <dbReference type="ChEBI" id="CHEBI:17319"/>
        <dbReference type="ChEBI" id="CHEBI:33737"/>
        <dbReference type="ChEBI" id="CHEBI:33738"/>
        <dbReference type="ChEBI" id="CHEBI:57844"/>
        <dbReference type="ChEBI" id="CHEBI:57856"/>
        <dbReference type="ChEBI" id="CHEBI:59789"/>
        <dbReference type="ChEBI" id="CHEBI:74411"/>
        <dbReference type="ChEBI" id="CHEBI:74497"/>
        <dbReference type="EC" id="2.1.1.192"/>
    </reaction>
</comment>
<comment type="catalytic activity">
    <reaction evidence="1">
        <text>adenosine(37) in tRNA + 2 reduced [2Fe-2S]-[ferredoxin] + 2 S-adenosyl-L-methionine = 2-methyladenosine(37) in tRNA + 5'-deoxyadenosine + L-methionine + 2 oxidized [2Fe-2S]-[ferredoxin] + S-adenosyl-L-homocysteine</text>
        <dbReference type="Rhea" id="RHEA:43332"/>
        <dbReference type="Rhea" id="RHEA-COMP:10000"/>
        <dbReference type="Rhea" id="RHEA-COMP:10001"/>
        <dbReference type="Rhea" id="RHEA-COMP:10162"/>
        <dbReference type="Rhea" id="RHEA-COMP:10485"/>
        <dbReference type="ChEBI" id="CHEBI:17319"/>
        <dbReference type="ChEBI" id="CHEBI:33737"/>
        <dbReference type="ChEBI" id="CHEBI:33738"/>
        <dbReference type="ChEBI" id="CHEBI:57844"/>
        <dbReference type="ChEBI" id="CHEBI:57856"/>
        <dbReference type="ChEBI" id="CHEBI:59789"/>
        <dbReference type="ChEBI" id="CHEBI:74411"/>
        <dbReference type="ChEBI" id="CHEBI:74497"/>
        <dbReference type="EC" id="2.1.1.192"/>
    </reaction>
</comment>
<comment type="cofactor">
    <cofactor evidence="1">
        <name>[4Fe-4S] cluster</name>
        <dbReference type="ChEBI" id="CHEBI:49883"/>
    </cofactor>
    <text evidence="1">Binds 1 [4Fe-4S] cluster. The cluster is coordinated with 3 cysteines and an exchangeable S-adenosyl-L-methionine.</text>
</comment>
<comment type="subcellular location">
    <subcellularLocation>
        <location evidence="1">Cytoplasm</location>
    </subcellularLocation>
</comment>
<comment type="miscellaneous">
    <text evidence="1">Reaction proceeds by a ping-pong mechanism involving intermediate methylation of a conserved cysteine residue.</text>
</comment>
<comment type="similarity">
    <text evidence="1">Belongs to the radical SAM superfamily. RlmN family.</text>
</comment>
<feature type="chain" id="PRO_0000350410" description="Dual-specificity RNA methyltransferase RlmN">
    <location>
        <begin position="1"/>
        <end position="384"/>
    </location>
</feature>
<feature type="domain" description="Radical SAM core" evidence="2">
    <location>
        <begin position="111"/>
        <end position="350"/>
    </location>
</feature>
<feature type="active site" description="Proton acceptor" evidence="1">
    <location>
        <position position="105"/>
    </location>
</feature>
<feature type="active site" description="S-methylcysteine intermediate" evidence="1">
    <location>
        <position position="355"/>
    </location>
</feature>
<feature type="binding site" evidence="1">
    <location>
        <position position="125"/>
    </location>
    <ligand>
        <name>[4Fe-4S] cluster</name>
        <dbReference type="ChEBI" id="CHEBI:49883"/>
        <note>4Fe-4S-S-AdoMet</note>
    </ligand>
</feature>
<feature type="binding site" evidence="1">
    <location>
        <position position="129"/>
    </location>
    <ligand>
        <name>[4Fe-4S] cluster</name>
        <dbReference type="ChEBI" id="CHEBI:49883"/>
        <note>4Fe-4S-S-AdoMet</note>
    </ligand>
</feature>
<feature type="binding site" evidence="1">
    <location>
        <position position="132"/>
    </location>
    <ligand>
        <name>[4Fe-4S] cluster</name>
        <dbReference type="ChEBI" id="CHEBI:49883"/>
        <note>4Fe-4S-S-AdoMet</note>
    </ligand>
</feature>
<feature type="binding site" evidence="1">
    <location>
        <begin position="179"/>
        <end position="180"/>
    </location>
    <ligand>
        <name>S-adenosyl-L-methionine</name>
        <dbReference type="ChEBI" id="CHEBI:59789"/>
    </ligand>
</feature>
<feature type="binding site" evidence="1">
    <location>
        <position position="211"/>
    </location>
    <ligand>
        <name>S-adenosyl-L-methionine</name>
        <dbReference type="ChEBI" id="CHEBI:59789"/>
    </ligand>
</feature>
<feature type="binding site" evidence="1">
    <location>
        <begin position="233"/>
        <end position="235"/>
    </location>
    <ligand>
        <name>S-adenosyl-L-methionine</name>
        <dbReference type="ChEBI" id="CHEBI:59789"/>
    </ligand>
</feature>
<feature type="binding site" evidence="1">
    <location>
        <position position="312"/>
    </location>
    <ligand>
        <name>S-adenosyl-L-methionine</name>
        <dbReference type="ChEBI" id="CHEBI:59789"/>
    </ligand>
</feature>
<feature type="disulfide bond" description="(transient)" evidence="1">
    <location>
        <begin position="118"/>
        <end position="355"/>
    </location>
</feature>
<dbReference type="EC" id="2.1.1.192" evidence="1"/>
<dbReference type="EMBL" id="CP000036">
    <property type="protein sequence ID" value="ABB67085.1"/>
    <property type="molecule type" value="Genomic_DNA"/>
</dbReference>
<dbReference type="RefSeq" id="WP_000003317.1">
    <property type="nucleotide sequence ID" value="NC_007613.1"/>
</dbReference>
<dbReference type="SMR" id="Q31XX3"/>
<dbReference type="KEGG" id="sbo:SBO_2541"/>
<dbReference type="HOGENOM" id="CLU_029101_0_0_6"/>
<dbReference type="Proteomes" id="UP000007067">
    <property type="component" value="Chromosome"/>
</dbReference>
<dbReference type="GO" id="GO:0005737">
    <property type="term" value="C:cytoplasm"/>
    <property type="evidence" value="ECO:0007669"/>
    <property type="project" value="UniProtKB-SubCell"/>
</dbReference>
<dbReference type="GO" id="GO:0051539">
    <property type="term" value="F:4 iron, 4 sulfur cluster binding"/>
    <property type="evidence" value="ECO:0007669"/>
    <property type="project" value="UniProtKB-UniRule"/>
</dbReference>
<dbReference type="GO" id="GO:0046872">
    <property type="term" value="F:metal ion binding"/>
    <property type="evidence" value="ECO:0007669"/>
    <property type="project" value="UniProtKB-KW"/>
</dbReference>
<dbReference type="GO" id="GO:0070040">
    <property type="term" value="F:rRNA (adenine(2503)-C2-)-methyltransferase activity"/>
    <property type="evidence" value="ECO:0007669"/>
    <property type="project" value="UniProtKB-UniRule"/>
</dbReference>
<dbReference type="GO" id="GO:0019843">
    <property type="term" value="F:rRNA binding"/>
    <property type="evidence" value="ECO:0007669"/>
    <property type="project" value="UniProtKB-UniRule"/>
</dbReference>
<dbReference type="GO" id="GO:0002935">
    <property type="term" value="F:tRNA (adenine(37)-C2)-methyltransferase activity"/>
    <property type="evidence" value="ECO:0007669"/>
    <property type="project" value="UniProtKB-UniRule"/>
</dbReference>
<dbReference type="GO" id="GO:0000049">
    <property type="term" value="F:tRNA binding"/>
    <property type="evidence" value="ECO:0007669"/>
    <property type="project" value="UniProtKB-UniRule"/>
</dbReference>
<dbReference type="GO" id="GO:0070475">
    <property type="term" value="P:rRNA base methylation"/>
    <property type="evidence" value="ECO:0007669"/>
    <property type="project" value="UniProtKB-UniRule"/>
</dbReference>
<dbReference type="GO" id="GO:0030488">
    <property type="term" value="P:tRNA methylation"/>
    <property type="evidence" value="ECO:0007669"/>
    <property type="project" value="UniProtKB-UniRule"/>
</dbReference>
<dbReference type="CDD" id="cd01335">
    <property type="entry name" value="Radical_SAM"/>
    <property type="match status" value="1"/>
</dbReference>
<dbReference type="FunFam" id="1.10.150.530:FF:000001">
    <property type="entry name" value="Dual-specificity RNA methyltransferase RlmN"/>
    <property type="match status" value="1"/>
</dbReference>
<dbReference type="FunFam" id="3.20.20.70:FF:000008">
    <property type="entry name" value="Dual-specificity RNA methyltransferase RlmN"/>
    <property type="match status" value="1"/>
</dbReference>
<dbReference type="Gene3D" id="1.10.150.530">
    <property type="match status" value="1"/>
</dbReference>
<dbReference type="Gene3D" id="3.20.20.70">
    <property type="entry name" value="Aldolase class I"/>
    <property type="match status" value="1"/>
</dbReference>
<dbReference type="HAMAP" id="MF_01849">
    <property type="entry name" value="RNA_methyltr_RlmN"/>
    <property type="match status" value="1"/>
</dbReference>
<dbReference type="InterPro" id="IPR013785">
    <property type="entry name" value="Aldolase_TIM"/>
</dbReference>
<dbReference type="InterPro" id="IPR040072">
    <property type="entry name" value="Methyltransferase_A"/>
</dbReference>
<dbReference type="InterPro" id="IPR048641">
    <property type="entry name" value="RlmN_N"/>
</dbReference>
<dbReference type="InterPro" id="IPR027492">
    <property type="entry name" value="RNA_MTrfase_RlmN"/>
</dbReference>
<dbReference type="InterPro" id="IPR004383">
    <property type="entry name" value="rRNA_lsu_MTrfase_RlmN/Cfr"/>
</dbReference>
<dbReference type="InterPro" id="IPR007197">
    <property type="entry name" value="rSAM"/>
</dbReference>
<dbReference type="NCBIfam" id="NF008396">
    <property type="entry name" value="PRK11194.1"/>
    <property type="match status" value="1"/>
</dbReference>
<dbReference type="NCBIfam" id="TIGR00048">
    <property type="entry name" value="rRNA_mod_RlmN"/>
    <property type="match status" value="1"/>
</dbReference>
<dbReference type="PANTHER" id="PTHR30544">
    <property type="entry name" value="23S RRNA METHYLTRANSFERASE"/>
    <property type="match status" value="1"/>
</dbReference>
<dbReference type="PANTHER" id="PTHR30544:SF5">
    <property type="entry name" value="RADICAL SAM CORE DOMAIN-CONTAINING PROTEIN"/>
    <property type="match status" value="1"/>
</dbReference>
<dbReference type="Pfam" id="PF04055">
    <property type="entry name" value="Radical_SAM"/>
    <property type="match status" value="1"/>
</dbReference>
<dbReference type="Pfam" id="PF21016">
    <property type="entry name" value="RlmN_N"/>
    <property type="match status" value="1"/>
</dbReference>
<dbReference type="PIRSF" id="PIRSF006004">
    <property type="entry name" value="CHP00048"/>
    <property type="match status" value="1"/>
</dbReference>
<dbReference type="SFLD" id="SFLDF00275">
    <property type="entry name" value="adenosine_C2_methyltransferase"/>
    <property type="match status" value="1"/>
</dbReference>
<dbReference type="SFLD" id="SFLDG01062">
    <property type="entry name" value="methyltransferase_(Class_A)"/>
    <property type="match status" value="1"/>
</dbReference>
<dbReference type="SUPFAM" id="SSF102114">
    <property type="entry name" value="Radical SAM enzymes"/>
    <property type="match status" value="1"/>
</dbReference>
<dbReference type="PROSITE" id="PS51918">
    <property type="entry name" value="RADICAL_SAM"/>
    <property type="match status" value="1"/>
</dbReference>
<evidence type="ECO:0000255" key="1">
    <source>
        <dbReference type="HAMAP-Rule" id="MF_01849"/>
    </source>
</evidence>
<evidence type="ECO:0000255" key="2">
    <source>
        <dbReference type="PROSITE-ProRule" id="PRU01266"/>
    </source>
</evidence>
<proteinExistence type="inferred from homology"/>
<reference key="1">
    <citation type="journal article" date="2005" name="Nucleic Acids Res.">
        <title>Genome dynamics and diversity of Shigella species, the etiologic agents of bacillary dysentery.</title>
        <authorList>
            <person name="Yang F."/>
            <person name="Yang J."/>
            <person name="Zhang X."/>
            <person name="Chen L."/>
            <person name="Jiang Y."/>
            <person name="Yan Y."/>
            <person name="Tang X."/>
            <person name="Wang J."/>
            <person name="Xiong Z."/>
            <person name="Dong J."/>
            <person name="Xue Y."/>
            <person name="Zhu Y."/>
            <person name="Xu X."/>
            <person name="Sun L."/>
            <person name="Chen S."/>
            <person name="Nie H."/>
            <person name="Peng J."/>
            <person name="Xu J."/>
            <person name="Wang Y."/>
            <person name="Yuan Z."/>
            <person name="Wen Y."/>
            <person name="Yao Z."/>
            <person name="Shen Y."/>
            <person name="Qiang B."/>
            <person name="Hou Y."/>
            <person name="Yu J."/>
            <person name="Jin Q."/>
        </authorList>
    </citation>
    <scope>NUCLEOTIDE SEQUENCE [LARGE SCALE GENOMIC DNA]</scope>
    <source>
        <strain>Sb227</strain>
    </source>
</reference>
<gene>
    <name evidence="1" type="primary">rlmN</name>
    <name type="ordered locus">SBO_2541</name>
</gene>
<name>RLMN_SHIBS</name>